<protein>
    <recommendedName>
        <fullName evidence="3">Conotoxin Cal6.41b</fullName>
    </recommendedName>
    <alternativeName>
        <fullName evidence="2">O3_cal6.1b</fullName>
    </alternativeName>
</protein>
<feature type="signal peptide" evidence="1">
    <location>
        <begin position="1"/>
        <end position="23"/>
    </location>
</feature>
<feature type="chain" id="PRO_0000450986" description="Conotoxin Cal6.41b" evidence="3">
    <location>
        <begin position="24"/>
        <end position="56"/>
    </location>
</feature>
<feature type="disulfide bond" evidence="3">
    <location>
        <begin position="27"/>
        <end position="41"/>
    </location>
</feature>
<feature type="disulfide bond" evidence="3">
    <location>
        <begin position="33"/>
        <end position="50"/>
    </location>
</feature>
<feature type="disulfide bond" evidence="3">
    <location>
        <begin position="40"/>
        <end position="54"/>
    </location>
</feature>
<proteinExistence type="inferred from homology"/>
<accession>P0DUA4</accession>
<reference key="1">
    <citation type="journal article" date="2019" name="Toxins">
        <title>The diversified O-superfamily in Californiconus californicus presents a conotoxin with antimycobacterial activity.</title>
        <authorList>
            <person name="Bernaldez-Sarabia J."/>
            <person name="Figueroa-Montiel A."/>
            <person name="Duenas S."/>
            <person name="Cervantes-Luevano K."/>
            <person name="Beltran J.A."/>
            <person name="Ortiz E."/>
            <person name="Jimenez S."/>
            <person name="Possani L.D."/>
            <person name="Paniagua-Solis J.F."/>
            <person name="Gonzalez-Canudas J."/>
            <person name="Licea-Navarro A."/>
        </authorList>
    </citation>
    <scope>NUCLEOTIDE SEQUENCE [MRNA]</scope>
    <source>
        <tissue>Venom duct</tissue>
    </source>
</reference>
<comment type="function">
    <text evidence="3">Probable neurotoxin.</text>
</comment>
<comment type="subcellular location">
    <subcellularLocation>
        <location evidence="4">Secreted</location>
    </subcellularLocation>
</comment>
<comment type="tissue specificity">
    <text evidence="4">Expressed by the venom duct.</text>
</comment>
<comment type="domain">
    <text evidence="3">The cysteine framework is VI/VII (C-C-CC-C-C).</text>
</comment>
<comment type="domain">
    <text evidence="3">The presence of a 'disulfide through disulfide knot' structurally defines this protein as a knottin.</text>
</comment>
<evidence type="ECO:0000255" key="1"/>
<evidence type="ECO:0000303" key="2">
    <source>
    </source>
</evidence>
<evidence type="ECO:0000305" key="3"/>
<evidence type="ECO:0000305" key="4">
    <source>
    </source>
</evidence>
<sequence>MSGSGAMLLGLLILVAMATSLDTREICWNHSECDDPSEWCCRMGSGHGSCQPVCRP</sequence>
<name>C61B_CONCL</name>
<keyword id="KW-1015">Disulfide bond</keyword>
<keyword id="KW-0960">Knottin</keyword>
<keyword id="KW-0528">Neurotoxin</keyword>
<keyword id="KW-0964">Secreted</keyword>
<keyword id="KW-0732">Signal</keyword>
<keyword id="KW-0800">Toxin</keyword>
<organism>
    <name type="scientific">Californiconus californicus</name>
    <name type="common">California cone</name>
    <name type="synonym">Conus californicus</name>
    <dbReference type="NCBI Taxonomy" id="1736779"/>
    <lineage>
        <taxon>Eukaryota</taxon>
        <taxon>Metazoa</taxon>
        <taxon>Spiralia</taxon>
        <taxon>Lophotrochozoa</taxon>
        <taxon>Mollusca</taxon>
        <taxon>Gastropoda</taxon>
        <taxon>Caenogastropoda</taxon>
        <taxon>Neogastropoda</taxon>
        <taxon>Conoidea</taxon>
        <taxon>Conidae</taxon>
        <taxon>Californiconus</taxon>
    </lineage>
</organism>
<dbReference type="GO" id="GO:0005576">
    <property type="term" value="C:extracellular region"/>
    <property type="evidence" value="ECO:0007669"/>
    <property type="project" value="UniProtKB-SubCell"/>
</dbReference>
<dbReference type="GO" id="GO:0090729">
    <property type="term" value="F:toxin activity"/>
    <property type="evidence" value="ECO:0007669"/>
    <property type="project" value="UniProtKB-KW"/>
</dbReference>